<feature type="chain" id="PRO_0000202583" description="Uncharacterized protein YCR100C">
    <location>
        <begin position="1"/>
        <end position="316"/>
    </location>
</feature>
<feature type="repeat" description="BNR 1">
    <location>
        <begin position="62"/>
        <end position="73"/>
    </location>
</feature>
<feature type="repeat" description="BNR 2">
    <location>
        <begin position="124"/>
        <end position="135"/>
    </location>
</feature>
<feature type="repeat" description="BNR 3">
    <location>
        <begin position="196"/>
        <end position="207"/>
    </location>
</feature>
<feature type="repeat" description="BNR 4">
    <location>
        <begin position="242"/>
        <end position="253"/>
    </location>
</feature>
<keyword id="KW-1185">Reference proteome</keyword>
<keyword id="KW-0677">Repeat</keyword>
<organism>
    <name type="scientific">Saccharomyces cerevisiae (strain ATCC 204508 / S288c)</name>
    <name type="common">Baker's yeast</name>
    <dbReference type="NCBI Taxonomy" id="559292"/>
    <lineage>
        <taxon>Eukaryota</taxon>
        <taxon>Fungi</taxon>
        <taxon>Dikarya</taxon>
        <taxon>Ascomycota</taxon>
        <taxon>Saccharomycotina</taxon>
        <taxon>Saccharomycetes</taxon>
        <taxon>Saccharomycetales</taxon>
        <taxon>Saccharomycetaceae</taxon>
        <taxon>Saccharomyces</taxon>
    </lineage>
</organism>
<reference key="1">
    <citation type="journal article" date="1992" name="Nature">
        <title>The complete DNA sequence of yeast chromosome III.</title>
        <authorList>
            <person name="Oliver S.G."/>
            <person name="van der Aart Q.J.M."/>
            <person name="Agostoni-Carbone M.L."/>
            <person name="Aigle M."/>
            <person name="Alberghina L."/>
            <person name="Alexandraki D."/>
            <person name="Antoine G."/>
            <person name="Anwar R."/>
            <person name="Ballesta J.P.G."/>
            <person name="Benit P."/>
            <person name="Berben G."/>
            <person name="Bergantino E."/>
            <person name="Biteau N."/>
            <person name="Bolle P.-A."/>
            <person name="Bolotin-Fukuhara M."/>
            <person name="Brown A."/>
            <person name="Brown A.J.P."/>
            <person name="Buhler J.-M."/>
            <person name="Carcano C."/>
            <person name="Carignani G."/>
            <person name="Cederberg H."/>
            <person name="Chanet R."/>
            <person name="Contreras R."/>
            <person name="Crouzet M."/>
            <person name="Daignan-Fornier B."/>
            <person name="Defoor E."/>
            <person name="Delgado M.D."/>
            <person name="Demolder J."/>
            <person name="Doira C."/>
            <person name="Dubois E."/>
            <person name="Dujon B."/>
            <person name="Duesterhoeft A."/>
            <person name="Erdmann D."/>
            <person name="Esteban M."/>
            <person name="Fabre F."/>
            <person name="Fairhead C."/>
            <person name="Faye G."/>
            <person name="Feldmann H."/>
            <person name="Fiers W."/>
            <person name="Francingues-Gaillard M.-C."/>
            <person name="Franco L."/>
            <person name="Frontali L."/>
            <person name="Fukuhara H."/>
            <person name="Fuller L.J."/>
            <person name="Galland P."/>
            <person name="Gent M.E."/>
            <person name="Gigot D."/>
            <person name="Gilliquet V."/>
            <person name="Glansdorff N."/>
            <person name="Goffeau A."/>
            <person name="Grenson M."/>
            <person name="Grisanti P."/>
            <person name="Grivell L.A."/>
            <person name="de Haan M."/>
            <person name="Haasemann M."/>
            <person name="Hatat D."/>
            <person name="Hoenicka J."/>
            <person name="Hegemann J.H."/>
            <person name="Herbert C.J."/>
            <person name="Hilger F."/>
            <person name="Hohmann S."/>
            <person name="Hollenberg C.P."/>
            <person name="Huse K."/>
            <person name="Iborra F."/>
            <person name="Indge K.J."/>
            <person name="Isono K."/>
            <person name="Jacq C."/>
            <person name="Jacquet M."/>
            <person name="James C.M."/>
            <person name="Jauniaux J.-C."/>
            <person name="Jia Y."/>
            <person name="Jimenez A."/>
            <person name="Kelly A."/>
            <person name="Kleinhans U."/>
            <person name="Kreisl P."/>
            <person name="Lanfranchi G."/>
            <person name="Lewis C."/>
            <person name="van der Linden C.G."/>
            <person name="Lucchini G."/>
            <person name="Lutzenkirchen K."/>
            <person name="Maat M.J."/>
            <person name="Mallet L."/>
            <person name="Mannhaupt G."/>
            <person name="Martegani E."/>
            <person name="Mathieu A."/>
            <person name="Maurer C.T.C."/>
            <person name="McConnell D."/>
            <person name="McKee R.A."/>
            <person name="Messenguy F."/>
            <person name="Mewes H.-W."/>
            <person name="Molemans F."/>
            <person name="Montague M.A."/>
            <person name="Muzi Falconi M."/>
            <person name="Navas L."/>
            <person name="Newlon C.S."/>
            <person name="Noone D."/>
            <person name="Pallier C."/>
            <person name="Panzeri L."/>
            <person name="Pearson B.M."/>
            <person name="Perea J."/>
            <person name="Philippsen P."/>
            <person name="Pierard A."/>
            <person name="Planta R.J."/>
            <person name="Plevani P."/>
            <person name="Poetsch B."/>
            <person name="Pohl F.M."/>
            <person name="Purnelle B."/>
            <person name="Ramezani Rad M."/>
            <person name="Rasmussen S.W."/>
            <person name="Raynal A."/>
            <person name="Remacha M.A."/>
            <person name="Richterich P."/>
            <person name="Roberts A.B."/>
            <person name="Rodriguez F."/>
            <person name="Sanz E."/>
            <person name="Schaaff-Gerstenschlaeger I."/>
            <person name="Scherens B."/>
            <person name="Schweitzer B."/>
            <person name="Shu Y."/>
            <person name="Skala J."/>
            <person name="Slonimski P.P."/>
            <person name="Sor F."/>
            <person name="Soustelle C."/>
            <person name="Spiegelberg R."/>
            <person name="Stateva L.I."/>
            <person name="Steensma H.Y."/>
            <person name="Steiner S."/>
            <person name="Thierry A."/>
            <person name="Thireos G."/>
            <person name="Tzermia M."/>
            <person name="Urrestarazu L.A."/>
            <person name="Valle G."/>
            <person name="Vetter I."/>
            <person name="van Vliet-Reedijk J.C."/>
            <person name="Voet M."/>
            <person name="Volckaert G."/>
            <person name="Vreken P."/>
            <person name="Wang H."/>
            <person name="Warmington J.R."/>
            <person name="von Wettstein D."/>
            <person name="Wicksteed B.L."/>
            <person name="Wilson C."/>
            <person name="Wurst H."/>
            <person name="Xu G."/>
            <person name="Yoshikawa A."/>
            <person name="Zimmermann F.K."/>
            <person name="Sgouros J.G."/>
        </authorList>
    </citation>
    <scope>NUCLEOTIDE SEQUENCE [LARGE SCALE GENOMIC DNA]</scope>
    <source>
        <strain>ATCC 204508 / S288c</strain>
    </source>
</reference>
<reference key="2">
    <citation type="journal article" date="2014" name="G3 (Bethesda)">
        <title>The reference genome sequence of Saccharomyces cerevisiae: Then and now.</title>
        <authorList>
            <person name="Engel S.R."/>
            <person name="Dietrich F.S."/>
            <person name="Fisk D.G."/>
            <person name="Binkley G."/>
            <person name="Balakrishnan R."/>
            <person name="Costanzo M.C."/>
            <person name="Dwight S.S."/>
            <person name="Hitz B.C."/>
            <person name="Karra K."/>
            <person name="Nash R.S."/>
            <person name="Weng S."/>
            <person name="Wong E.D."/>
            <person name="Lloyd P."/>
            <person name="Skrzypek M.S."/>
            <person name="Miyasato S.R."/>
            <person name="Simison M."/>
            <person name="Cherry J.M."/>
        </authorList>
    </citation>
    <scope>GENOME REANNOTATION</scope>
    <source>
        <strain>ATCC 204508 / S288c</strain>
    </source>
</reference>
<protein>
    <recommendedName>
        <fullName>Uncharacterized protein YCR100C</fullName>
    </recommendedName>
</protein>
<gene>
    <name type="ordered locus">YCR100C</name>
</gene>
<dbReference type="EMBL" id="X59720">
    <property type="protein sequence ID" value="CAA42242.1"/>
    <property type="molecule type" value="Genomic_DNA"/>
</dbReference>
<dbReference type="EMBL" id="BK006937">
    <property type="protein sequence ID" value="DAA07570.1"/>
    <property type="molecule type" value="Genomic_DNA"/>
</dbReference>
<dbReference type="PIR" id="S19412">
    <property type="entry name" value="S19412"/>
</dbReference>
<dbReference type="SMR" id="P25606"/>
<dbReference type="BioGRID" id="31073">
    <property type="interactions" value="78"/>
</dbReference>
<dbReference type="DIP" id="DIP-5010N"/>
<dbReference type="FunCoup" id="P25606">
    <property type="interactions" value="1"/>
</dbReference>
<dbReference type="IntAct" id="P25606">
    <property type="interactions" value="4"/>
</dbReference>
<dbReference type="MINT" id="P25606"/>
<dbReference type="STRING" id="4932.YCR100C"/>
<dbReference type="TCDB" id="3.A.30.1.1">
    <property type="family name" value="the endoplasmic reticulum surface retrieval pathway (er-surf) family"/>
</dbReference>
<dbReference type="PaxDb" id="4932-YCR100C"/>
<dbReference type="PeptideAtlas" id="P25606"/>
<dbReference type="EnsemblFungi" id="YCR100C_mRNA">
    <property type="protein sequence ID" value="YCR100C"/>
    <property type="gene ID" value="YCR100C"/>
</dbReference>
<dbReference type="KEGG" id="sce:YCR100C"/>
<dbReference type="AGR" id="SGD:S000000697"/>
<dbReference type="SGD" id="S000000697">
    <property type="gene designation" value="YCR100C"/>
</dbReference>
<dbReference type="VEuPathDB" id="FungiDB:YCR100C"/>
<dbReference type="eggNOG" id="KOG3511">
    <property type="taxonomic scope" value="Eukaryota"/>
</dbReference>
<dbReference type="GeneTree" id="ENSGT01030000234563"/>
<dbReference type="HOGENOM" id="CLU_055180_0_0_1"/>
<dbReference type="InParanoid" id="P25606"/>
<dbReference type="OMA" id="MSSTDIW"/>
<dbReference type="OrthoDB" id="443634at2759"/>
<dbReference type="BioCyc" id="YEAST:G3O-29394-MONOMER"/>
<dbReference type="BioGRID-ORCS" id="850464">
    <property type="hits" value="0 hits in 10 CRISPR screens"/>
</dbReference>
<dbReference type="PRO" id="PR:P25606"/>
<dbReference type="Proteomes" id="UP000002311">
    <property type="component" value="Chromosome III"/>
</dbReference>
<dbReference type="RNAct" id="P25606">
    <property type="molecule type" value="protein"/>
</dbReference>
<dbReference type="GO" id="GO:0016020">
    <property type="term" value="C:membrane"/>
    <property type="evidence" value="ECO:0000255"/>
    <property type="project" value="SGD"/>
</dbReference>
<dbReference type="CDD" id="cd15482">
    <property type="entry name" value="Sialidase_non-viral"/>
    <property type="match status" value="1"/>
</dbReference>
<dbReference type="Gene3D" id="2.120.10.10">
    <property type="match status" value="1"/>
</dbReference>
<dbReference type="InterPro" id="IPR031778">
    <property type="entry name" value="Sortilin_N"/>
</dbReference>
<dbReference type="InterPro" id="IPR050310">
    <property type="entry name" value="VPS10-sortilin"/>
</dbReference>
<dbReference type="PANTHER" id="PTHR12106">
    <property type="entry name" value="SORTILIN RELATED"/>
    <property type="match status" value="1"/>
</dbReference>
<dbReference type="PANTHER" id="PTHR12106:SF27">
    <property type="entry name" value="SORTILIN-RELATED RECEPTOR"/>
    <property type="match status" value="1"/>
</dbReference>
<dbReference type="Pfam" id="PF15902">
    <property type="entry name" value="Sortilin-Vps10"/>
    <property type="match status" value="1"/>
</dbReference>
<dbReference type="SUPFAM" id="SSF110296">
    <property type="entry name" value="Oligoxyloglucan reducing end-specific cellobiohydrolase"/>
    <property type="match status" value="1"/>
</dbReference>
<accession>P25606</accession>
<accession>D6VRA1</accession>
<proteinExistence type="predicted"/>
<name>YCZ0_YEAST</name>
<sequence length="316" mass="35257">MSSTDIWISNDASTFQKAQLPTQLRHVKVIKIREDSIGRIILLISTEITNEENADPDLSEIFISDSQGLKFSPVEWTPNHQFGNFRLTFPDFLKGTIFGSFHPSIDYSNHQVNYTENIAGGETKISVDNGLTWSNLKVVDEENADSFGCDITRPERCSLQGYFYNLKLSNPSAGIILMTGSVGDDNEFDRKDRKTFISRDGGLTWRVAHNSSGLYATGDLGNIIVYIPSPSYKDGDVQSKLYFSLDQGRTWNQYELVDALFYIHPLELINTTPDGSGSKFILSGHLITTASQEGNNTNISYIARSVLYAIDFSAAF</sequence>